<gene>
    <name evidence="1" type="primary">ihfA</name>
    <name evidence="1" type="synonym">himA</name>
    <name type="ordered locus">BBta_4630</name>
</gene>
<dbReference type="EMBL" id="CP000494">
    <property type="protein sequence ID" value="ABQ36658.1"/>
    <property type="molecule type" value="Genomic_DNA"/>
</dbReference>
<dbReference type="RefSeq" id="WP_012044648.1">
    <property type="nucleotide sequence ID" value="NC_009485.1"/>
</dbReference>
<dbReference type="SMR" id="A5EKG4"/>
<dbReference type="STRING" id="288000.BBta_4630"/>
<dbReference type="KEGG" id="bbt:BBta_4630"/>
<dbReference type="eggNOG" id="COG0776">
    <property type="taxonomic scope" value="Bacteria"/>
</dbReference>
<dbReference type="HOGENOM" id="CLU_105066_1_1_5"/>
<dbReference type="OrthoDB" id="9797747at2"/>
<dbReference type="Proteomes" id="UP000000246">
    <property type="component" value="Chromosome"/>
</dbReference>
<dbReference type="GO" id="GO:0005829">
    <property type="term" value="C:cytosol"/>
    <property type="evidence" value="ECO:0007669"/>
    <property type="project" value="TreeGrafter"/>
</dbReference>
<dbReference type="GO" id="GO:0003677">
    <property type="term" value="F:DNA binding"/>
    <property type="evidence" value="ECO:0007669"/>
    <property type="project" value="UniProtKB-UniRule"/>
</dbReference>
<dbReference type="GO" id="GO:0030527">
    <property type="term" value="F:structural constituent of chromatin"/>
    <property type="evidence" value="ECO:0007669"/>
    <property type="project" value="InterPro"/>
</dbReference>
<dbReference type="GO" id="GO:0006310">
    <property type="term" value="P:DNA recombination"/>
    <property type="evidence" value="ECO:0007669"/>
    <property type="project" value="UniProtKB-UniRule"/>
</dbReference>
<dbReference type="GO" id="GO:0009893">
    <property type="term" value="P:positive regulation of metabolic process"/>
    <property type="evidence" value="ECO:0007669"/>
    <property type="project" value="UniProtKB-ARBA"/>
</dbReference>
<dbReference type="GO" id="GO:0006355">
    <property type="term" value="P:regulation of DNA-templated transcription"/>
    <property type="evidence" value="ECO:0007669"/>
    <property type="project" value="UniProtKB-UniRule"/>
</dbReference>
<dbReference type="GO" id="GO:0006417">
    <property type="term" value="P:regulation of translation"/>
    <property type="evidence" value="ECO:0007669"/>
    <property type="project" value="UniProtKB-UniRule"/>
</dbReference>
<dbReference type="CDD" id="cd13835">
    <property type="entry name" value="IHF_A"/>
    <property type="match status" value="1"/>
</dbReference>
<dbReference type="FunFam" id="4.10.520.10:FF:000010">
    <property type="entry name" value="Integration host factor subunit alpha"/>
    <property type="match status" value="1"/>
</dbReference>
<dbReference type="Gene3D" id="4.10.520.10">
    <property type="entry name" value="IHF-like DNA-binding proteins"/>
    <property type="match status" value="1"/>
</dbReference>
<dbReference type="HAMAP" id="MF_00380">
    <property type="entry name" value="IHF_alpha"/>
    <property type="match status" value="1"/>
</dbReference>
<dbReference type="InterPro" id="IPR000119">
    <property type="entry name" value="Hist_DNA-bd"/>
</dbReference>
<dbReference type="InterPro" id="IPR020816">
    <property type="entry name" value="Histone-like_DNA-bd_CS"/>
</dbReference>
<dbReference type="InterPro" id="IPR010992">
    <property type="entry name" value="IHF-like_DNA-bd_dom_sf"/>
</dbReference>
<dbReference type="InterPro" id="IPR005684">
    <property type="entry name" value="IHF_alpha"/>
</dbReference>
<dbReference type="NCBIfam" id="TIGR00987">
    <property type="entry name" value="himA"/>
    <property type="match status" value="1"/>
</dbReference>
<dbReference type="NCBIfam" id="NF001401">
    <property type="entry name" value="PRK00285.1"/>
    <property type="match status" value="1"/>
</dbReference>
<dbReference type="PANTHER" id="PTHR33175">
    <property type="entry name" value="DNA-BINDING PROTEIN HU"/>
    <property type="match status" value="1"/>
</dbReference>
<dbReference type="PANTHER" id="PTHR33175:SF2">
    <property type="entry name" value="INTEGRATION HOST FACTOR SUBUNIT ALPHA"/>
    <property type="match status" value="1"/>
</dbReference>
<dbReference type="Pfam" id="PF00216">
    <property type="entry name" value="Bac_DNA_binding"/>
    <property type="match status" value="1"/>
</dbReference>
<dbReference type="PRINTS" id="PR01727">
    <property type="entry name" value="DNABINDINGHU"/>
</dbReference>
<dbReference type="SMART" id="SM00411">
    <property type="entry name" value="BHL"/>
    <property type="match status" value="1"/>
</dbReference>
<dbReference type="SUPFAM" id="SSF47729">
    <property type="entry name" value="IHF-like DNA-binding proteins"/>
    <property type="match status" value="1"/>
</dbReference>
<dbReference type="PROSITE" id="PS00045">
    <property type="entry name" value="HISTONE_LIKE"/>
    <property type="match status" value="1"/>
</dbReference>
<organism>
    <name type="scientific">Bradyrhizobium sp. (strain BTAi1 / ATCC BAA-1182)</name>
    <dbReference type="NCBI Taxonomy" id="288000"/>
    <lineage>
        <taxon>Bacteria</taxon>
        <taxon>Pseudomonadati</taxon>
        <taxon>Pseudomonadota</taxon>
        <taxon>Alphaproteobacteria</taxon>
        <taxon>Hyphomicrobiales</taxon>
        <taxon>Nitrobacteraceae</taxon>
        <taxon>Bradyrhizobium</taxon>
    </lineage>
</organism>
<proteinExistence type="inferred from homology"/>
<sequence length="119" mass="13042">MTGTGKTVTRVDLCEAVYQKVGLSRTESSAFVELVLKEITDCLERGETVKLSSFGSFMVRKKGQRIGRNPKTGTEVPISPRRVMVFKPSAILKQRINGQQGSGKMNGEASHEQLSAEPE</sequence>
<evidence type="ECO:0000255" key="1">
    <source>
        <dbReference type="HAMAP-Rule" id="MF_00380"/>
    </source>
</evidence>
<evidence type="ECO:0000256" key="2">
    <source>
        <dbReference type="SAM" id="MobiDB-lite"/>
    </source>
</evidence>
<reference key="1">
    <citation type="journal article" date="2007" name="Science">
        <title>Legumes symbioses: absence of nod genes in photosynthetic bradyrhizobia.</title>
        <authorList>
            <person name="Giraud E."/>
            <person name="Moulin L."/>
            <person name="Vallenet D."/>
            <person name="Barbe V."/>
            <person name="Cytryn E."/>
            <person name="Avarre J.-C."/>
            <person name="Jaubert M."/>
            <person name="Simon D."/>
            <person name="Cartieaux F."/>
            <person name="Prin Y."/>
            <person name="Bena G."/>
            <person name="Hannibal L."/>
            <person name="Fardoux J."/>
            <person name="Kojadinovic M."/>
            <person name="Vuillet L."/>
            <person name="Lajus A."/>
            <person name="Cruveiller S."/>
            <person name="Rouy Z."/>
            <person name="Mangenot S."/>
            <person name="Segurens B."/>
            <person name="Dossat C."/>
            <person name="Franck W.L."/>
            <person name="Chang W.-S."/>
            <person name="Saunders E."/>
            <person name="Bruce D."/>
            <person name="Richardson P."/>
            <person name="Normand P."/>
            <person name="Dreyfus B."/>
            <person name="Pignol D."/>
            <person name="Stacey G."/>
            <person name="Emerich D."/>
            <person name="Vermeglio A."/>
            <person name="Medigue C."/>
            <person name="Sadowsky M."/>
        </authorList>
    </citation>
    <scope>NUCLEOTIDE SEQUENCE [LARGE SCALE GENOMIC DNA]</scope>
    <source>
        <strain>BTAi1 / ATCC BAA-1182</strain>
    </source>
</reference>
<comment type="function">
    <text evidence="1">This protein is one of the two subunits of integration host factor, a specific DNA-binding protein that functions in genetic recombination as well as in transcriptional and translational control.</text>
</comment>
<comment type="subunit">
    <text evidence="1">Heterodimer of an alpha and a beta chain.</text>
</comment>
<comment type="similarity">
    <text evidence="1">Belongs to the bacterial histone-like protein family.</text>
</comment>
<accession>A5EKG4</accession>
<name>IHFA_BRASB</name>
<protein>
    <recommendedName>
        <fullName evidence="1">Integration host factor subunit alpha</fullName>
        <shortName evidence="1">IHF-alpha</shortName>
    </recommendedName>
</protein>
<feature type="chain" id="PRO_1000060536" description="Integration host factor subunit alpha">
    <location>
        <begin position="1"/>
        <end position="119"/>
    </location>
</feature>
<feature type="region of interest" description="Disordered" evidence="2">
    <location>
        <begin position="96"/>
        <end position="119"/>
    </location>
</feature>
<keyword id="KW-0233">DNA recombination</keyword>
<keyword id="KW-0238">DNA-binding</keyword>
<keyword id="KW-1185">Reference proteome</keyword>
<keyword id="KW-0804">Transcription</keyword>
<keyword id="KW-0805">Transcription regulation</keyword>
<keyword id="KW-0810">Translation regulation</keyword>